<dbReference type="EC" id="7.1.1.-"/>
<dbReference type="EMBL" id="AL939120">
    <property type="protein sequence ID" value="CAB44525.1"/>
    <property type="molecule type" value="Genomic_DNA"/>
</dbReference>
<dbReference type="PIR" id="T34618">
    <property type="entry name" value="T34618"/>
</dbReference>
<dbReference type="RefSeq" id="NP_628730.1">
    <property type="nucleotide sequence ID" value="NC_003888.3"/>
</dbReference>
<dbReference type="RefSeq" id="WP_011029735.1">
    <property type="nucleotide sequence ID" value="NZ_VNID01000017.1"/>
</dbReference>
<dbReference type="SMR" id="Q9XAR0"/>
<dbReference type="FunCoup" id="Q9XAR0">
    <property type="interactions" value="409"/>
</dbReference>
<dbReference type="STRING" id="100226.gene:17762213"/>
<dbReference type="PaxDb" id="100226-SCO4568"/>
<dbReference type="KEGG" id="sco:SCO4568"/>
<dbReference type="PATRIC" id="fig|100226.15.peg.4640"/>
<dbReference type="eggNOG" id="COG1034">
    <property type="taxonomic scope" value="Bacteria"/>
</dbReference>
<dbReference type="HOGENOM" id="CLU_000422_4_0_11"/>
<dbReference type="InParanoid" id="Q9XAR0"/>
<dbReference type="OrthoDB" id="9810782at2"/>
<dbReference type="PhylomeDB" id="Q9XAR0"/>
<dbReference type="Proteomes" id="UP000001973">
    <property type="component" value="Chromosome"/>
</dbReference>
<dbReference type="GO" id="GO:0016020">
    <property type="term" value="C:membrane"/>
    <property type="evidence" value="ECO:0000318"/>
    <property type="project" value="GO_Central"/>
</dbReference>
<dbReference type="GO" id="GO:0051537">
    <property type="term" value="F:2 iron, 2 sulfur cluster binding"/>
    <property type="evidence" value="ECO:0007669"/>
    <property type="project" value="UniProtKB-KW"/>
</dbReference>
<dbReference type="GO" id="GO:0051539">
    <property type="term" value="F:4 iron, 4 sulfur cluster binding"/>
    <property type="evidence" value="ECO:0007669"/>
    <property type="project" value="UniProtKB-KW"/>
</dbReference>
<dbReference type="GO" id="GO:0046872">
    <property type="term" value="F:metal ion binding"/>
    <property type="evidence" value="ECO:0007669"/>
    <property type="project" value="UniProtKB-KW"/>
</dbReference>
<dbReference type="GO" id="GO:0043546">
    <property type="term" value="F:molybdopterin cofactor binding"/>
    <property type="evidence" value="ECO:0007669"/>
    <property type="project" value="InterPro"/>
</dbReference>
<dbReference type="GO" id="GO:0008137">
    <property type="term" value="F:NADH dehydrogenase (ubiquinone) activity"/>
    <property type="evidence" value="ECO:0007669"/>
    <property type="project" value="InterPro"/>
</dbReference>
<dbReference type="GO" id="GO:0048038">
    <property type="term" value="F:quinone binding"/>
    <property type="evidence" value="ECO:0007669"/>
    <property type="project" value="UniProtKB-KW"/>
</dbReference>
<dbReference type="GO" id="GO:0042773">
    <property type="term" value="P:ATP synthesis coupled electron transport"/>
    <property type="evidence" value="ECO:0007669"/>
    <property type="project" value="InterPro"/>
</dbReference>
<dbReference type="GO" id="GO:0022904">
    <property type="term" value="P:respiratory electron transport chain"/>
    <property type="evidence" value="ECO:0000318"/>
    <property type="project" value="GO_Central"/>
</dbReference>
<dbReference type="CDD" id="cd00207">
    <property type="entry name" value="fer2"/>
    <property type="match status" value="1"/>
</dbReference>
<dbReference type="FunFam" id="3.30.70.20:FF:000016">
    <property type="entry name" value="NADH-quinone oxidoreductase"/>
    <property type="match status" value="1"/>
</dbReference>
<dbReference type="FunFam" id="3.40.50.740:FF:000028">
    <property type="entry name" value="NADH-quinone oxidoreductase"/>
    <property type="match status" value="1"/>
</dbReference>
<dbReference type="FunFam" id="3.10.20.740:FF:000001">
    <property type="entry name" value="NADH-quinone oxidoreductase subunit G"/>
    <property type="match status" value="1"/>
</dbReference>
<dbReference type="Gene3D" id="3.10.20.740">
    <property type="match status" value="1"/>
</dbReference>
<dbReference type="Gene3D" id="3.30.70.20">
    <property type="match status" value="1"/>
</dbReference>
<dbReference type="Gene3D" id="3.40.50.740">
    <property type="match status" value="2"/>
</dbReference>
<dbReference type="Gene3D" id="2.20.25.90">
    <property type="entry name" value="ADC-like domains"/>
    <property type="match status" value="1"/>
</dbReference>
<dbReference type="Gene3D" id="3.40.228.10">
    <property type="entry name" value="Dimethylsulfoxide Reductase, domain 2"/>
    <property type="match status" value="1"/>
</dbReference>
<dbReference type="InterPro" id="IPR036010">
    <property type="entry name" value="2Fe-2S_ferredoxin-like_sf"/>
</dbReference>
<dbReference type="InterPro" id="IPR001041">
    <property type="entry name" value="2Fe-2S_ferredoxin-type"/>
</dbReference>
<dbReference type="InterPro" id="IPR009010">
    <property type="entry name" value="Asp_de-COase-like_dom_sf"/>
</dbReference>
<dbReference type="InterPro" id="IPR006657">
    <property type="entry name" value="MoPterin_dinucl-bd_dom"/>
</dbReference>
<dbReference type="InterPro" id="IPR006656">
    <property type="entry name" value="Mopterin_OxRdtase"/>
</dbReference>
<dbReference type="InterPro" id="IPR006963">
    <property type="entry name" value="Mopterin_OxRdtase_4Fe-4S_dom"/>
</dbReference>
<dbReference type="InterPro" id="IPR000283">
    <property type="entry name" value="NADH_UbQ_OxRdtase_75kDa_su_CS"/>
</dbReference>
<dbReference type="InterPro" id="IPR054351">
    <property type="entry name" value="NADH_UbQ_OxRdtase_ferredoxin"/>
</dbReference>
<dbReference type="InterPro" id="IPR010228">
    <property type="entry name" value="NADH_UbQ_OxRdtase_Gsu"/>
</dbReference>
<dbReference type="InterPro" id="IPR019574">
    <property type="entry name" value="NADH_UbQ_OxRdtase_Gsu_4Fe4S-bd"/>
</dbReference>
<dbReference type="InterPro" id="IPR050123">
    <property type="entry name" value="Prok_molybdopt-oxidoreductase"/>
</dbReference>
<dbReference type="NCBIfam" id="TIGR01973">
    <property type="entry name" value="NuoG"/>
    <property type="match status" value="1"/>
</dbReference>
<dbReference type="NCBIfam" id="NF005895">
    <property type="entry name" value="PRK07860.1"/>
    <property type="match status" value="1"/>
</dbReference>
<dbReference type="PANTHER" id="PTHR43105:SF12">
    <property type="entry name" value="NADH-QUINONE OXIDOREDUCTASE SUBUNIT G"/>
    <property type="match status" value="1"/>
</dbReference>
<dbReference type="PANTHER" id="PTHR43105">
    <property type="entry name" value="RESPIRATORY NITRATE REDUCTASE"/>
    <property type="match status" value="1"/>
</dbReference>
<dbReference type="Pfam" id="PF13510">
    <property type="entry name" value="Fer2_4"/>
    <property type="match status" value="1"/>
</dbReference>
<dbReference type="Pfam" id="PF22151">
    <property type="entry name" value="Fer4_NDSU1"/>
    <property type="match status" value="1"/>
</dbReference>
<dbReference type="Pfam" id="PF22117">
    <property type="entry name" value="Fer4_Nqo3"/>
    <property type="match status" value="1"/>
</dbReference>
<dbReference type="Pfam" id="PF00384">
    <property type="entry name" value="Molybdopterin"/>
    <property type="match status" value="1"/>
</dbReference>
<dbReference type="Pfam" id="PF01568">
    <property type="entry name" value="Molydop_binding"/>
    <property type="match status" value="1"/>
</dbReference>
<dbReference type="Pfam" id="PF10588">
    <property type="entry name" value="NADH-G_4Fe-4S_3"/>
    <property type="match status" value="1"/>
</dbReference>
<dbReference type="SMART" id="SM00926">
    <property type="entry name" value="Molybdop_Fe4S4"/>
    <property type="match status" value="1"/>
</dbReference>
<dbReference type="SMART" id="SM00929">
    <property type="entry name" value="NADH-G_4Fe-4S_3"/>
    <property type="match status" value="1"/>
</dbReference>
<dbReference type="SUPFAM" id="SSF54292">
    <property type="entry name" value="2Fe-2S ferredoxin-like"/>
    <property type="match status" value="1"/>
</dbReference>
<dbReference type="SUPFAM" id="SSF54862">
    <property type="entry name" value="4Fe-4S ferredoxins"/>
    <property type="match status" value="1"/>
</dbReference>
<dbReference type="SUPFAM" id="SSF50692">
    <property type="entry name" value="ADC-like"/>
    <property type="match status" value="1"/>
</dbReference>
<dbReference type="SUPFAM" id="SSF53706">
    <property type="entry name" value="Formate dehydrogenase/DMSO reductase, domains 1-3"/>
    <property type="match status" value="1"/>
</dbReference>
<dbReference type="PROSITE" id="PS51085">
    <property type="entry name" value="2FE2S_FER_2"/>
    <property type="match status" value="1"/>
</dbReference>
<dbReference type="PROSITE" id="PS51839">
    <property type="entry name" value="4FE4S_HC3"/>
    <property type="match status" value="1"/>
</dbReference>
<dbReference type="PROSITE" id="PS51669">
    <property type="entry name" value="4FE4S_MOW_BIS_MGD"/>
    <property type="match status" value="1"/>
</dbReference>
<dbReference type="PROSITE" id="PS00641">
    <property type="entry name" value="COMPLEX1_75K_1"/>
    <property type="match status" value="1"/>
</dbReference>
<dbReference type="PROSITE" id="PS00642">
    <property type="entry name" value="COMPLEX1_75K_2"/>
    <property type="match status" value="1"/>
</dbReference>
<dbReference type="PROSITE" id="PS00643">
    <property type="entry name" value="COMPLEX1_75K_3"/>
    <property type="match status" value="1"/>
</dbReference>
<proteinExistence type="inferred from homology"/>
<keyword id="KW-0001">2Fe-2S</keyword>
<keyword id="KW-0004">4Fe-4S</keyword>
<keyword id="KW-0408">Iron</keyword>
<keyword id="KW-0411">Iron-sulfur</keyword>
<keyword id="KW-0479">Metal-binding</keyword>
<keyword id="KW-0520">NAD</keyword>
<keyword id="KW-0874">Quinone</keyword>
<keyword id="KW-1185">Reference proteome</keyword>
<keyword id="KW-1278">Translocase</keyword>
<feature type="chain" id="PRO_0000118563" description="NADH-quinone oxidoreductase subunit G">
    <location>
        <begin position="1"/>
        <end position="843"/>
    </location>
</feature>
<feature type="domain" description="2Fe-2S ferredoxin-type" evidence="3">
    <location>
        <begin position="20"/>
        <end position="98"/>
    </location>
</feature>
<feature type="domain" description="4Fe-4S His(Cys)3-ligated-type" evidence="5">
    <location>
        <begin position="100"/>
        <end position="139"/>
    </location>
</feature>
<feature type="domain" description="4Fe-4S Mo/W bis-MGD-type" evidence="4">
    <location>
        <begin position="238"/>
        <end position="294"/>
    </location>
</feature>
<feature type="binding site" evidence="1">
    <location>
        <position position="54"/>
    </location>
    <ligand>
        <name>[2Fe-2S] cluster</name>
        <dbReference type="ChEBI" id="CHEBI:190135"/>
    </ligand>
</feature>
<feature type="binding site" evidence="1">
    <location>
        <position position="65"/>
    </location>
    <ligand>
        <name>[2Fe-2S] cluster</name>
        <dbReference type="ChEBI" id="CHEBI:190135"/>
    </ligand>
</feature>
<feature type="binding site" evidence="1">
    <location>
        <position position="68"/>
    </location>
    <ligand>
        <name>[2Fe-2S] cluster</name>
        <dbReference type="ChEBI" id="CHEBI:190135"/>
    </ligand>
</feature>
<feature type="binding site" evidence="1">
    <location>
        <position position="82"/>
    </location>
    <ligand>
        <name>[2Fe-2S] cluster</name>
        <dbReference type="ChEBI" id="CHEBI:190135"/>
    </ligand>
</feature>
<feature type="binding site" evidence="5">
    <location>
        <position position="116"/>
    </location>
    <ligand>
        <name>[4Fe-4S] cluster</name>
        <dbReference type="ChEBI" id="CHEBI:49883"/>
        <label>1</label>
    </ligand>
</feature>
<feature type="binding site" evidence="5">
    <location>
        <position position="120"/>
    </location>
    <ligand>
        <name>[4Fe-4S] cluster</name>
        <dbReference type="ChEBI" id="CHEBI:49883"/>
        <label>1</label>
    </ligand>
</feature>
<feature type="binding site" evidence="5">
    <location>
        <position position="123"/>
    </location>
    <ligand>
        <name>[4Fe-4S] cluster</name>
        <dbReference type="ChEBI" id="CHEBI:49883"/>
        <label>1</label>
    </ligand>
</feature>
<feature type="binding site" evidence="5">
    <location>
        <position position="129"/>
    </location>
    <ligand>
        <name>[4Fe-4S] cluster</name>
        <dbReference type="ChEBI" id="CHEBI:49883"/>
        <label>1</label>
    </ligand>
</feature>
<feature type="binding site" evidence="1">
    <location>
        <position position="169"/>
    </location>
    <ligand>
        <name>[4Fe-4S] cluster</name>
        <dbReference type="ChEBI" id="CHEBI:49883"/>
        <label>2</label>
    </ligand>
</feature>
<feature type="binding site" evidence="1">
    <location>
        <position position="172"/>
    </location>
    <ligand>
        <name>[4Fe-4S] cluster</name>
        <dbReference type="ChEBI" id="CHEBI:49883"/>
        <label>2</label>
    </ligand>
</feature>
<feature type="binding site" evidence="1">
    <location>
        <position position="175"/>
    </location>
    <ligand>
        <name>[4Fe-4S] cluster</name>
        <dbReference type="ChEBI" id="CHEBI:49883"/>
        <label>2</label>
    </ligand>
</feature>
<feature type="binding site" evidence="1">
    <location>
        <position position="219"/>
    </location>
    <ligand>
        <name>[4Fe-4S] cluster</name>
        <dbReference type="ChEBI" id="CHEBI:49883"/>
        <label>2</label>
    </ligand>
</feature>
<feature type="binding site" evidence="2">
    <location>
        <position position="245"/>
    </location>
    <ligand>
        <name>[4Fe-4S] cluster</name>
        <dbReference type="ChEBI" id="CHEBI:49883"/>
        <label>3</label>
    </ligand>
</feature>
<feature type="binding site" evidence="2">
    <location>
        <position position="248"/>
    </location>
    <ligand>
        <name>[4Fe-4S] cluster</name>
        <dbReference type="ChEBI" id="CHEBI:49883"/>
        <label>3</label>
    </ligand>
</feature>
<feature type="binding site" evidence="2">
    <location>
        <position position="252"/>
    </location>
    <ligand>
        <name>[4Fe-4S] cluster</name>
        <dbReference type="ChEBI" id="CHEBI:49883"/>
        <label>3</label>
    </ligand>
</feature>
<feature type="binding site" evidence="2">
    <location>
        <position position="280"/>
    </location>
    <ligand>
        <name>[4Fe-4S] cluster</name>
        <dbReference type="ChEBI" id="CHEBI:49883"/>
        <label>3</label>
    </ligand>
</feature>
<protein>
    <recommendedName>
        <fullName>NADH-quinone oxidoreductase subunit G</fullName>
        <ecNumber>7.1.1.-</ecNumber>
    </recommendedName>
    <alternativeName>
        <fullName>NADH dehydrogenase I subunit G</fullName>
    </alternativeName>
    <alternativeName>
        <fullName>NDH-1 subunit G</fullName>
    </alternativeName>
</protein>
<organism>
    <name type="scientific">Streptomyces coelicolor (strain ATCC BAA-471 / A3(2) / M145)</name>
    <dbReference type="NCBI Taxonomy" id="100226"/>
    <lineage>
        <taxon>Bacteria</taxon>
        <taxon>Bacillati</taxon>
        <taxon>Actinomycetota</taxon>
        <taxon>Actinomycetes</taxon>
        <taxon>Kitasatosporales</taxon>
        <taxon>Streptomycetaceae</taxon>
        <taxon>Streptomyces</taxon>
        <taxon>Streptomyces albidoflavus group</taxon>
    </lineage>
</organism>
<evidence type="ECO:0000250" key="1"/>
<evidence type="ECO:0000255" key="2"/>
<evidence type="ECO:0000255" key="3">
    <source>
        <dbReference type="PROSITE-ProRule" id="PRU00465"/>
    </source>
</evidence>
<evidence type="ECO:0000255" key="4">
    <source>
        <dbReference type="PROSITE-ProRule" id="PRU01004"/>
    </source>
</evidence>
<evidence type="ECO:0000255" key="5">
    <source>
        <dbReference type="PROSITE-ProRule" id="PRU01184"/>
    </source>
</evidence>
<evidence type="ECO:0000305" key="6"/>
<name>NUOG_STRCO</name>
<gene>
    <name type="primary">nuoG</name>
    <name type="ordered locus">SCO4568</name>
    <name type="ORF">SCD16A.15c</name>
</gene>
<comment type="function">
    <text evidence="1">NDH-1 shuttles electrons from NADH, via FMN and iron-sulfur (Fe-S) centers, to quinones in the respiratory chain. Couples the redox reaction to proton translocation (for every two electrons transferred, four hydrogen ions are translocated across the cytoplasmic membrane), and thus conserves the redox energy in a proton gradient (By similarity).</text>
</comment>
<comment type="catalytic activity">
    <reaction>
        <text>a quinone + NADH + 5 H(+)(in) = a quinol + NAD(+) + 4 H(+)(out)</text>
        <dbReference type="Rhea" id="RHEA:57888"/>
        <dbReference type="ChEBI" id="CHEBI:15378"/>
        <dbReference type="ChEBI" id="CHEBI:24646"/>
        <dbReference type="ChEBI" id="CHEBI:57540"/>
        <dbReference type="ChEBI" id="CHEBI:57945"/>
        <dbReference type="ChEBI" id="CHEBI:132124"/>
    </reaction>
</comment>
<comment type="cofactor">
    <cofactor evidence="1">
        <name>[2Fe-2S] cluster</name>
        <dbReference type="ChEBI" id="CHEBI:190135"/>
    </cofactor>
    <text evidence="1">Binds 1 [2Fe-2S] cluster per subunit.</text>
</comment>
<comment type="cofactor">
    <cofactor evidence="1">
        <name>[4Fe-4S] cluster</name>
        <dbReference type="ChEBI" id="CHEBI:49883"/>
    </cofactor>
    <text evidence="1">Binds 3 [4Fe-4S] clusters per subunit.</text>
</comment>
<comment type="similarity">
    <text evidence="6">Belongs to the complex I 75 kDa subunit family.</text>
</comment>
<sequence>MTVTTSTPSGGGAAAVPPEDLVTLTIDGAEISVPKGTLVIRAAEQLGIEIPRFCDHPLLDPAGACRQCIVEVEGQRKPMASCTITCTDGMVVKTQLTSPVAEKAQHGVMELLLINHPLDCPVCDKGGECPLQNQAMSHGQSDSRFEGKKRTYEKPVPISTQVLLDRERCVLCARCTRFSNQVAGDPMIELIERGALQQVGTGEGDPFESYFSGNTIQICPVGALTSAAYRFRSRPFDLISSPSVCEHCSGGCATRTDHRRGKVMRRLAANEPEVNEEWICDKGRFGFRYAQQRDRLTTPLVRNAEGELEPASWPEALQIAAQGLLASRGRTGVLTGGRLTVEDAYAYSKFARVALDTNDIDFRARVHSAEEADFLAAHVAGRGRDLGGSSRTESGGGAGVTYTSLEKAPAVLLVGFEAEEEAPGVFLRLRKAWRKHGQKVFSLATHATRGLEKAGGTLLPAAPGTETEWLDALASGVGLEEGGTQAAEALRAEGAVIVVGERLASVAGGLTSAVRTSAATGARLVWIPRRAGERGAIEAGALPSLLPGGRPATDPRAREEVAALWGLADLPHRYGRDTGEIVEAAARGELQALLVAGVEVADLPDPTRARAALDEAGFVVSLELRPSEVSERADVVLPVAAVAEKPGTFLNWEGRVRFFEAALKPDQMTRRLAPTDARVLQMLADAMDVHLGLPDLRTTRAEIDRLGAWDGPRAGEPLQTASALPRPAAGEAVLAGHRLLLDQGLLQQGDEALAGTRHAARARLSAATAAEAGVKDGDVLAVTGPAGAVELPLQVTEMPDRVVWLPLNSAGSGVASDAGVLPGTLVRIGPATPAGAAPKEVEA</sequence>
<accession>Q9XAR0</accession>
<reference key="1">
    <citation type="journal article" date="2002" name="Nature">
        <title>Complete genome sequence of the model actinomycete Streptomyces coelicolor A3(2).</title>
        <authorList>
            <person name="Bentley S.D."/>
            <person name="Chater K.F."/>
            <person name="Cerdeno-Tarraga A.-M."/>
            <person name="Challis G.L."/>
            <person name="Thomson N.R."/>
            <person name="James K.D."/>
            <person name="Harris D.E."/>
            <person name="Quail M.A."/>
            <person name="Kieser H."/>
            <person name="Harper D."/>
            <person name="Bateman A."/>
            <person name="Brown S."/>
            <person name="Chandra G."/>
            <person name="Chen C.W."/>
            <person name="Collins M."/>
            <person name="Cronin A."/>
            <person name="Fraser A."/>
            <person name="Goble A."/>
            <person name="Hidalgo J."/>
            <person name="Hornsby T."/>
            <person name="Howarth S."/>
            <person name="Huang C.-H."/>
            <person name="Kieser T."/>
            <person name="Larke L."/>
            <person name="Murphy L.D."/>
            <person name="Oliver K."/>
            <person name="O'Neil S."/>
            <person name="Rabbinowitsch E."/>
            <person name="Rajandream M.A."/>
            <person name="Rutherford K.M."/>
            <person name="Rutter S."/>
            <person name="Seeger K."/>
            <person name="Saunders D."/>
            <person name="Sharp S."/>
            <person name="Squares R."/>
            <person name="Squares S."/>
            <person name="Taylor K."/>
            <person name="Warren T."/>
            <person name="Wietzorrek A."/>
            <person name="Woodward J.R."/>
            <person name="Barrell B.G."/>
            <person name="Parkhill J."/>
            <person name="Hopwood D.A."/>
        </authorList>
    </citation>
    <scope>NUCLEOTIDE SEQUENCE [LARGE SCALE GENOMIC DNA]</scope>
    <source>
        <strain>ATCC BAA-471 / A3(2) / M145</strain>
    </source>
</reference>